<gene>
    <name evidence="5" type="primary">Otulinl</name>
    <name evidence="5" type="synonym">Fam105a</name>
</gene>
<comment type="function">
    <text evidence="1">Lacks deubiquitinase activity.</text>
</comment>
<comment type="subunit">
    <text evidence="1">Does not bind ubiquitin or ubiquitin-like proteins.</text>
</comment>
<comment type="subcellular location">
    <subcellularLocation>
        <location evidence="1">Cytoplasm</location>
    </subcellularLocation>
    <subcellularLocation>
        <location evidence="1">Endoplasmic reticulum membrane</location>
        <topology evidence="1">Peripheral membrane protein</topology>
    </subcellularLocation>
    <subcellularLocation>
        <location evidence="1">Nucleus envelope</location>
    </subcellularLocation>
</comment>
<comment type="alternative products">
    <event type="alternative splicing"/>
    <isoform>
        <id>Q3TVP5-1</id>
        <name>1</name>
        <sequence type="displayed"/>
    </isoform>
    <isoform>
        <id>Q3TVP5-2</id>
        <name>2</name>
        <sequence type="described" ref="VSP_022738"/>
    </isoform>
</comment>
<comment type="domain">
    <text evidence="1">The N-terminal region that precedes the OTU domain mediates interaction with cellular membranes.</text>
</comment>
<comment type="similarity">
    <text evidence="4">Belongs to the peptidase C65 family. Otulin subfamily.</text>
</comment>
<comment type="caution">
    <text evidence="1">Although highly similar to the deubiquitinase OTULIN, lacks the conserved active site Cys at position 136 which is replaced by an Asp residue, and does not show deubiquitinase activity.</text>
</comment>
<feature type="chain" id="PRO_0000274405" description="Inactive ubiquitin thioesterase OTULINL">
    <location>
        <begin position="1"/>
        <end position="353"/>
    </location>
</feature>
<feature type="domain" description="OTU" evidence="2">
    <location>
        <begin position="125"/>
        <end position="353"/>
    </location>
</feature>
<feature type="region of interest" description="Required for membrane binding" evidence="1">
    <location>
        <begin position="1"/>
        <end position="80"/>
    </location>
</feature>
<feature type="splice variant" id="VSP_022738" description="In isoform 2." evidence="3">
    <location>
        <begin position="114"/>
        <end position="163"/>
    </location>
</feature>
<feature type="sequence conflict" description="In Ref. 1; BAE29828/BAE30963." evidence="4" ref="1">
    <original>G</original>
    <variation>S</variation>
    <location>
        <position position="173"/>
    </location>
</feature>
<keyword id="KW-0025">Alternative splicing</keyword>
<keyword id="KW-0963">Cytoplasm</keyword>
<keyword id="KW-0256">Endoplasmic reticulum</keyword>
<keyword id="KW-0472">Membrane</keyword>
<keyword id="KW-0539">Nucleus</keyword>
<keyword id="KW-1185">Reference proteome</keyword>
<proteinExistence type="evidence at protein level"/>
<dbReference type="EMBL" id="AK150760">
    <property type="protein sequence ID" value="BAE29828.1"/>
    <property type="molecule type" value="mRNA"/>
</dbReference>
<dbReference type="EMBL" id="AK152120">
    <property type="protein sequence ID" value="BAE30963.1"/>
    <property type="molecule type" value="mRNA"/>
</dbReference>
<dbReference type="EMBL" id="AK152590">
    <property type="protein sequence ID" value="BAE31339.1"/>
    <property type="molecule type" value="mRNA"/>
</dbReference>
<dbReference type="EMBL" id="AK160030">
    <property type="protein sequence ID" value="BAE35573.1"/>
    <property type="molecule type" value="mRNA"/>
</dbReference>
<dbReference type="EMBL" id="BC052328">
    <property type="protein sequence ID" value="AAH52328.1"/>
    <property type="molecule type" value="mRNA"/>
</dbReference>
<dbReference type="CCDS" id="CCDS27403.1">
    <molecule id="Q3TVP5-2"/>
</dbReference>
<dbReference type="CCDS" id="CCDS88743.1">
    <molecule id="Q3TVP5-1"/>
</dbReference>
<dbReference type="RefSeq" id="NP_001229352.1">
    <molecule id="Q3TVP5-1"/>
    <property type="nucleotide sequence ID" value="NM_001242423.2"/>
</dbReference>
<dbReference type="RefSeq" id="NP_938043.1">
    <molecule id="Q3TVP5-2"/>
    <property type="nucleotide sequence ID" value="NM_198301.3"/>
</dbReference>
<dbReference type="SMR" id="Q3TVP5"/>
<dbReference type="BioGRID" id="230147">
    <property type="interactions" value="1"/>
</dbReference>
<dbReference type="FunCoup" id="Q3TVP5">
    <property type="interactions" value="330"/>
</dbReference>
<dbReference type="STRING" id="10090.ENSMUSP00000098305"/>
<dbReference type="iPTMnet" id="Q3TVP5"/>
<dbReference type="PhosphoSitePlus" id="Q3TVP5"/>
<dbReference type="SwissPalm" id="Q3TVP5"/>
<dbReference type="PeptideAtlas" id="Q3TVP5"/>
<dbReference type="ProteomicsDB" id="275489">
    <molecule id="Q3TVP5-1"/>
</dbReference>
<dbReference type="ProteomicsDB" id="275490">
    <molecule id="Q3TVP5-2"/>
</dbReference>
<dbReference type="Antibodypedia" id="22546">
    <property type="antibodies" value="123 antibodies from 21 providers"/>
</dbReference>
<dbReference type="Ensembl" id="ENSMUST00000100739.5">
    <molecule id="Q3TVP5-2"/>
    <property type="protein sequence ID" value="ENSMUSP00000098305.4"/>
    <property type="gene ID" value="ENSMUSG00000056069.11"/>
</dbReference>
<dbReference type="Ensembl" id="ENSMUST00000226145.2">
    <molecule id="Q3TVP5-1"/>
    <property type="protein sequence ID" value="ENSMUSP00000154664.2"/>
    <property type="gene ID" value="ENSMUSG00000056069.11"/>
</dbReference>
<dbReference type="GeneID" id="223433"/>
<dbReference type="KEGG" id="mmu:223433"/>
<dbReference type="UCSC" id="uc007vjs.2">
    <molecule id="Q3TVP5-2"/>
    <property type="organism name" value="mouse"/>
</dbReference>
<dbReference type="UCSC" id="uc007vjt.2">
    <molecule id="Q3TVP5-1"/>
    <property type="organism name" value="mouse"/>
</dbReference>
<dbReference type="AGR" id="MGI:2687281"/>
<dbReference type="CTD" id="54491"/>
<dbReference type="MGI" id="MGI:2687281">
    <property type="gene designation" value="Otulinl"/>
</dbReference>
<dbReference type="VEuPathDB" id="HostDB:ENSMUSG00000056069"/>
<dbReference type="GeneTree" id="ENSGT00390000009802"/>
<dbReference type="HOGENOM" id="CLU_051856_0_0_1"/>
<dbReference type="InParanoid" id="Q3TVP5"/>
<dbReference type="OMA" id="NDRHYHV"/>
<dbReference type="OrthoDB" id="5962728at2759"/>
<dbReference type="PhylomeDB" id="Q3TVP5"/>
<dbReference type="TreeFam" id="TF328709"/>
<dbReference type="BioGRID-ORCS" id="223433">
    <property type="hits" value="0 hits in 78 CRISPR screens"/>
</dbReference>
<dbReference type="ChiTaRS" id="Otulinl">
    <property type="organism name" value="mouse"/>
</dbReference>
<dbReference type="PRO" id="PR:Q3TVP5"/>
<dbReference type="Proteomes" id="UP000000589">
    <property type="component" value="Chromosome 15"/>
</dbReference>
<dbReference type="RNAct" id="Q3TVP5">
    <property type="molecule type" value="protein"/>
</dbReference>
<dbReference type="Bgee" id="ENSMUSG00000056069">
    <property type="expression patterns" value="Expressed in skin of snout and 213 other cell types or tissues"/>
</dbReference>
<dbReference type="ExpressionAtlas" id="Q3TVP5">
    <property type="expression patterns" value="baseline and differential"/>
</dbReference>
<dbReference type="GO" id="GO:0005737">
    <property type="term" value="C:cytoplasm"/>
    <property type="evidence" value="ECO:0000250"/>
    <property type="project" value="UniProtKB"/>
</dbReference>
<dbReference type="GO" id="GO:0098554">
    <property type="term" value="C:cytoplasmic side of endoplasmic reticulum membrane"/>
    <property type="evidence" value="ECO:0000250"/>
    <property type="project" value="UniProtKB"/>
</dbReference>
<dbReference type="GO" id="GO:0005635">
    <property type="term" value="C:nuclear envelope"/>
    <property type="evidence" value="ECO:0007669"/>
    <property type="project" value="UniProtKB-SubCell"/>
</dbReference>
<dbReference type="GO" id="GO:1990108">
    <property type="term" value="P:protein linear deubiquitination"/>
    <property type="evidence" value="ECO:0000250"/>
    <property type="project" value="UniProtKB"/>
</dbReference>
<dbReference type="InterPro" id="IPR023235">
    <property type="entry name" value="FAM105"/>
</dbReference>
<dbReference type="InterPro" id="IPR023236">
    <property type="entry name" value="OTULINL"/>
</dbReference>
<dbReference type="PANTHER" id="PTHR33662:SF1">
    <property type="entry name" value="INACTIVE UBIQUITIN THIOESTERASE OTULINL"/>
    <property type="match status" value="1"/>
</dbReference>
<dbReference type="PANTHER" id="PTHR33662">
    <property type="entry name" value="OTU DEUBIQUITINASE WITH LINEAR LINKAGE-SPECIFICITY A-RELATED"/>
    <property type="match status" value="1"/>
</dbReference>
<dbReference type="Pfam" id="PF16218">
    <property type="entry name" value="Peptidase_C101"/>
    <property type="match status" value="1"/>
</dbReference>
<dbReference type="PRINTS" id="PR02055">
    <property type="entry name" value="PROTEINF105"/>
</dbReference>
<dbReference type="PRINTS" id="PR02056">
    <property type="entry name" value="PROTEINF105A"/>
</dbReference>
<sequence>MEAPRSAPRERERARTTSGSDQVHSWILVTSQVLSAAWRIARAFVMTTLSPLSATFSYFRSLYLYLGHQLKWWIGYLQRKFKRNLSVEAEVDLLSYCAREWKGEAPRARLMRKAYEELFWRHHIKCVRAVKRDNYDALRSVLFQIFSQGLSFPSWMKEKDIVKLPEKLLFSQGCNWIQQYSFGPEKYTGSNVFGKLRKCVELLKLQWTEFSGMRDHHKRGSMCNSLFSDAILECKLYEALKFLMLYQVTEAYEQMKTNKVIPSLFRLLFSRESSPDPLSFMMNHLNSIGDTCGLDQIDMFILGYSLQVKIKVFRLFKFNSRDFAVCYPEEPLREWPEISLLTENGHHYHIPVF</sequence>
<protein>
    <recommendedName>
        <fullName>Inactive ubiquitin thioesterase OTULINL</fullName>
    </recommendedName>
</protein>
<evidence type="ECO:0000250" key="1">
    <source>
        <dbReference type="UniProtKB" id="Q9NUU6"/>
    </source>
</evidence>
<evidence type="ECO:0000255" key="2">
    <source>
        <dbReference type="PROSITE-ProRule" id="PRU00139"/>
    </source>
</evidence>
<evidence type="ECO:0000303" key="3">
    <source>
    </source>
</evidence>
<evidence type="ECO:0000305" key="4"/>
<evidence type="ECO:0000312" key="5">
    <source>
        <dbReference type="MGI" id="MGI:2687281"/>
    </source>
</evidence>
<reference key="1">
    <citation type="journal article" date="2005" name="Science">
        <title>The transcriptional landscape of the mammalian genome.</title>
        <authorList>
            <person name="Carninci P."/>
            <person name="Kasukawa T."/>
            <person name="Katayama S."/>
            <person name="Gough J."/>
            <person name="Frith M.C."/>
            <person name="Maeda N."/>
            <person name="Oyama R."/>
            <person name="Ravasi T."/>
            <person name="Lenhard B."/>
            <person name="Wells C."/>
            <person name="Kodzius R."/>
            <person name="Shimokawa K."/>
            <person name="Bajic V.B."/>
            <person name="Brenner S.E."/>
            <person name="Batalov S."/>
            <person name="Forrest A.R."/>
            <person name="Zavolan M."/>
            <person name="Davis M.J."/>
            <person name="Wilming L.G."/>
            <person name="Aidinis V."/>
            <person name="Allen J.E."/>
            <person name="Ambesi-Impiombato A."/>
            <person name="Apweiler R."/>
            <person name="Aturaliya R.N."/>
            <person name="Bailey T.L."/>
            <person name="Bansal M."/>
            <person name="Baxter L."/>
            <person name="Beisel K.W."/>
            <person name="Bersano T."/>
            <person name="Bono H."/>
            <person name="Chalk A.M."/>
            <person name="Chiu K.P."/>
            <person name="Choudhary V."/>
            <person name="Christoffels A."/>
            <person name="Clutterbuck D.R."/>
            <person name="Crowe M.L."/>
            <person name="Dalla E."/>
            <person name="Dalrymple B.P."/>
            <person name="de Bono B."/>
            <person name="Della Gatta G."/>
            <person name="di Bernardo D."/>
            <person name="Down T."/>
            <person name="Engstrom P."/>
            <person name="Fagiolini M."/>
            <person name="Faulkner G."/>
            <person name="Fletcher C.F."/>
            <person name="Fukushima T."/>
            <person name="Furuno M."/>
            <person name="Futaki S."/>
            <person name="Gariboldi M."/>
            <person name="Georgii-Hemming P."/>
            <person name="Gingeras T.R."/>
            <person name="Gojobori T."/>
            <person name="Green R.E."/>
            <person name="Gustincich S."/>
            <person name="Harbers M."/>
            <person name="Hayashi Y."/>
            <person name="Hensch T.K."/>
            <person name="Hirokawa N."/>
            <person name="Hill D."/>
            <person name="Huminiecki L."/>
            <person name="Iacono M."/>
            <person name="Ikeo K."/>
            <person name="Iwama A."/>
            <person name="Ishikawa T."/>
            <person name="Jakt M."/>
            <person name="Kanapin A."/>
            <person name="Katoh M."/>
            <person name="Kawasawa Y."/>
            <person name="Kelso J."/>
            <person name="Kitamura H."/>
            <person name="Kitano H."/>
            <person name="Kollias G."/>
            <person name="Krishnan S.P."/>
            <person name="Kruger A."/>
            <person name="Kummerfeld S.K."/>
            <person name="Kurochkin I.V."/>
            <person name="Lareau L.F."/>
            <person name="Lazarevic D."/>
            <person name="Lipovich L."/>
            <person name="Liu J."/>
            <person name="Liuni S."/>
            <person name="McWilliam S."/>
            <person name="Madan Babu M."/>
            <person name="Madera M."/>
            <person name="Marchionni L."/>
            <person name="Matsuda H."/>
            <person name="Matsuzawa S."/>
            <person name="Miki H."/>
            <person name="Mignone F."/>
            <person name="Miyake S."/>
            <person name="Morris K."/>
            <person name="Mottagui-Tabar S."/>
            <person name="Mulder N."/>
            <person name="Nakano N."/>
            <person name="Nakauchi H."/>
            <person name="Ng P."/>
            <person name="Nilsson R."/>
            <person name="Nishiguchi S."/>
            <person name="Nishikawa S."/>
            <person name="Nori F."/>
            <person name="Ohara O."/>
            <person name="Okazaki Y."/>
            <person name="Orlando V."/>
            <person name="Pang K.C."/>
            <person name="Pavan W.J."/>
            <person name="Pavesi G."/>
            <person name="Pesole G."/>
            <person name="Petrovsky N."/>
            <person name="Piazza S."/>
            <person name="Reed J."/>
            <person name="Reid J.F."/>
            <person name="Ring B.Z."/>
            <person name="Ringwald M."/>
            <person name="Rost B."/>
            <person name="Ruan Y."/>
            <person name="Salzberg S.L."/>
            <person name="Sandelin A."/>
            <person name="Schneider C."/>
            <person name="Schoenbach C."/>
            <person name="Sekiguchi K."/>
            <person name="Semple C.A."/>
            <person name="Seno S."/>
            <person name="Sessa L."/>
            <person name="Sheng Y."/>
            <person name="Shibata Y."/>
            <person name="Shimada H."/>
            <person name="Shimada K."/>
            <person name="Silva D."/>
            <person name="Sinclair B."/>
            <person name="Sperling S."/>
            <person name="Stupka E."/>
            <person name="Sugiura K."/>
            <person name="Sultana R."/>
            <person name="Takenaka Y."/>
            <person name="Taki K."/>
            <person name="Tammoja K."/>
            <person name="Tan S.L."/>
            <person name="Tang S."/>
            <person name="Taylor M.S."/>
            <person name="Tegner J."/>
            <person name="Teichmann S.A."/>
            <person name="Ueda H.R."/>
            <person name="van Nimwegen E."/>
            <person name="Verardo R."/>
            <person name="Wei C.L."/>
            <person name="Yagi K."/>
            <person name="Yamanishi H."/>
            <person name="Zabarovsky E."/>
            <person name="Zhu S."/>
            <person name="Zimmer A."/>
            <person name="Hide W."/>
            <person name="Bult C."/>
            <person name="Grimmond S.M."/>
            <person name="Teasdale R.D."/>
            <person name="Liu E.T."/>
            <person name="Brusic V."/>
            <person name="Quackenbush J."/>
            <person name="Wahlestedt C."/>
            <person name="Mattick J.S."/>
            <person name="Hume D.A."/>
            <person name="Kai C."/>
            <person name="Sasaki D."/>
            <person name="Tomaru Y."/>
            <person name="Fukuda S."/>
            <person name="Kanamori-Katayama M."/>
            <person name="Suzuki M."/>
            <person name="Aoki J."/>
            <person name="Arakawa T."/>
            <person name="Iida J."/>
            <person name="Imamura K."/>
            <person name="Itoh M."/>
            <person name="Kato T."/>
            <person name="Kawaji H."/>
            <person name="Kawagashira N."/>
            <person name="Kawashima T."/>
            <person name="Kojima M."/>
            <person name="Kondo S."/>
            <person name="Konno H."/>
            <person name="Nakano K."/>
            <person name="Ninomiya N."/>
            <person name="Nishio T."/>
            <person name="Okada M."/>
            <person name="Plessy C."/>
            <person name="Shibata K."/>
            <person name="Shiraki T."/>
            <person name="Suzuki S."/>
            <person name="Tagami M."/>
            <person name="Waki K."/>
            <person name="Watahiki A."/>
            <person name="Okamura-Oho Y."/>
            <person name="Suzuki H."/>
            <person name="Kawai J."/>
            <person name="Hayashizaki Y."/>
        </authorList>
    </citation>
    <scope>NUCLEOTIDE SEQUENCE [LARGE SCALE MRNA] (ISOFORM 1)</scope>
    <source>
        <strain>C57BL/6J</strain>
        <tissue>Bone marrow</tissue>
    </source>
</reference>
<reference key="2">
    <citation type="journal article" date="2004" name="Genome Res.">
        <title>The status, quality, and expansion of the NIH full-length cDNA project: the Mammalian Gene Collection (MGC).</title>
        <authorList>
            <consortium name="The MGC Project Team"/>
        </authorList>
    </citation>
    <scope>NUCLEOTIDE SEQUENCE [LARGE SCALE MRNA] (ISOFORM 2)</scope>
    <source>
        <tissue>Olfactory epithelium</tissue>
    </source>
</reference>
<reference key="3">
    <citation type="journal article" date="2010" name="Cell">
        <title>A tissue-specific atlas of mouse protein phosphorylation and expression.</title>
        <authorList>
            <person name="Huttlin E.L."/>
            <person name="Jedrychowski M.P."/>
            <person name="Elias J.E."/>
            <person name="Goswami T."/>
            <person name="Rad R."/>
            <person name="Beausoleil S.A."/>
            <person name="Villen J."/>
            <person name="Haas W."/>
            <person name="Sowa M.E."/>
            <person name="Gygi S.P."/>
        </authorList>
    </citation>
    <scope>IDENTIFICATION BY MASS SPECTROMETRY [LARGE SCALE ANALYSIS]</scope>
    <source>
        <tissue>Spleen</tissue>
    </source>
</reference>
<accession>Q3TVP5</accession>
<accession>Q3U8Q4</accession>
<accession>Q80WP7</accession>
<name>OTULL_MOUSE</name>
<organism>
    <name type="scientific">Mus musculus</name>
    <name type="common">Mouse</name>
    <dbReference type="NCBI Taxonomy" id="10090"/>
    <lineage>
        <taxon>Eukaryota</taxon>
        <taxon>Metazoa</taxon>
        <taxon>Chordata</taxon>
        <taxon>Craniata</taxon>
        <taxon>Vertebrata</taxon>
        <taxon>Euteleostomi</taxon>
        <taxon>Mammalia</taxon>
        <taxon>Eutheria</taxon>
        <taxon>Euarchontoglires</taxon>
        <taxon>Glires</taxon>
        <taxon>Rodentia</taxon>
        <taxon>Myomorpha</taxon>
        <taxon>Muroidea</taxon>
        <taxon>Muridae</taxon>
        <taxon>Murinae</taxon>
        <taxon>Mus</taxon>
        <taxon>Mus</taxon>
    </lineage>
</organism>